<proteinExistence type="inferred from homology"/>
<evidence type="ECO:0000250" key="1"/>
<evidence type="ECO:0000255" key="2">
    <source>
        <dbReference type="PROSITE-ProRule" id="PRU00319"/>
    </source>
</evidence>
<sequence>MVDGKKRPGKDLDRIDRNILNELQKDGRISNVELSKRVGLSPTPCLERVRRLERQGFIQGYTALLNPHYLDASLLVFVEITLNRGAPDVFEQFNTAVQKLEEIQECHLVSGDFDYLLKTRVPDMSAYRKLLGETLLRLPGVNDTRTYVVMEEVKQSNRLVIKTR</sequence>
<feature type="initiator methionine" description="Removed" evidence="1">
    <location>
        <position position="1"/>
    </location>
</feature>
<feature type="chain" id="PRO_0000111736" description="Leucine-responsive regulatory protein">
    <location>
        <begin position="2"/>
        <end position="164"/>
    </location>
</feature>
<feature type="domain" description="HTH asnC-type" evidence="2">
    <location>
        <begin position="12"/>
        <end position="73"/>
    </location>
</feature>
<feature type="DNA-binding region" description="H-T-H motif" evidence="2">
    <location>
        <begin position="31"/>
        <end position="50"/>
    </location>
</feature>
<organism>
    <name type="scientific">Serratia marcescens</name>
    <dbReference type="NCBI Taxonomy" id="615"/>
    <lineage>
        <taxon>Bacteria</taxon>
        <taxon>Pseudomonadati</taxon>
        <taxon>Pseudomonadota</taxon>
        <taxon>Gammaproteobacteria</taxon>
        <taxon>Enterobacterales</taxon>
        <taxon>Yersiniaceae</taxon>
        <taxon>Serratia</taxon>
    </lineage>
</organism>
<gene>
    <name type="primary">lrp</name>
</gene>
<dbReference type="EMBL" id="U02276">
    <property type="protein sequence ID" value="AAA75466.1"/>
    <property type="molecule type" value="Genomic_DNA"/>
</dbReference>
<dbReference type="PIR" id="S59991">
    <property type="entry name" value="S59991"/>
</dbReference>
<dbReference type="SMR" id="P37425"/>
<dbReference type="STRING" id="273526.SMDB11_0977"/>
<dbReference type="GO" id="GO:0005829">
    <property type="term" value="C:cytosol"/>
    <property type="evidence" value="ECO:0007669"/>
    <property type="project" value="TreeGrafter"/>
</dbReference>
<dbReference type="GO" id="GO:0043565">
    <property type="term" value="F:sequence-specific DNA binding"/>
    <property type="evidence" value="ECO:0007669"/>
    <property type="project" value="InterPro"/>
</dbReference>
<dbReference type="GO" id="GO:0006524">
    <property type="term" value="P:alanine catabolic process"/>
    <property type="evidence" value="ECO:0007669"/>
    <property type="project" value="TreeGrafter"/>
</dbReference>
<dbReference type="GO" id="GO:0006355">
    <property type="term" value="P:regulation of DNA-templated transcription"/>
    <property type="evidence" value="ECO:0007669"/>
    <property type="project" value="UniProtKB-ARBA"/>
</dbReference>
<dbReference type="GO" id="GO:0043201">
    <property type="term" value="P:response to L-leucine"/>
    <property type="evidence" value="ECO:0007669"/>
    <property type="project" value="TreeGrafter"/>
</dbReference>
<dbReference type="CDD" id="cd00090">
    <property type="entry name" value="HTH_ARSR"/>
    <property type="match status" value="1"/>
</dbReference>
<dbReference type="FunFam" id="1.10.10.10:FF:000015">
    <property type="entry name" value="Leucine-responsive transcriptional regulator Lrp"/>
    <property type="match status" value="1"/>
</dbReference>
<dbReference type="FunFam" id="3.30.70.920:FF:000001">
    <property type="entry name" value="Transcriptional regulator, AsnC family"/>
    <property type="match status" value="1"/>
</dbReference>
<dbReference type="Gene3D" id="3.30.70.920">
    <property type="match status" value="1"/>
</dbReference>
<dbReference type="Gene3D" id="1.10.10.10">
    <property type="entry name" value="Winged helix-like DNA-binding domain superfamily/Winged helix DNA-binding domain"/>
    <property type="match status" value="1"/>
</dbReference>
<dbReference type="InterPro" id="IPR011991">
    <property type="entry name" value="ArsR-like_HTH"/>
</dbReference>
<dbReference type="InterPro" id="IPR000485">
    <property type="entry name" value="AsnC-type_HTH_dom"/>
</dbReference>
<dbReference type="InterPro" id="IPR011008">
    <property type="entry name" value="Dimeric_a/b-barrel"/>
</dbReference>
<dbReference type="InterPro" id="IPR019888">
    <property type="entry name" value="Tscrpt_reg_AsnC-like"/>
</dbReference>
<dbReference type="InterPro" id="IPR019887">
    <property type="entry name" value="Tscrpt_reg_AsnC/Lrp_C"/>
</dbReference>
<dbReference type="InterPro" id="IPR019885">
    <property type="entry name" value="Tscrpt_reg_HTH_AsnC-type_CS"/>
</dbReference>
<dbReference type="InterPro" id="IPR036388">
    <property type="entry name" value="WH-like_DNA-bd_sf"/>
</dbReference>
<dbReference type="InterPro" id="IPR036390">
    <property type="entry name" value="WH_DNA-bd_sf"/>
</dbReference>
<dbReference type="NCBIfam" id="NF008370">
    <property type="entry name" value="PRK11169.1"/>
    <property type="match status" value="1"/>
</dbReference>
<dbReference type="PANTHER" id="PTHR30154">
    <property type="entry name" value="LEUCINE-RESPONSIVE REGULATORY PROTEIN"/>
    <property type="match status" value="1"/>
</dbReference>
<dbReference type="PANTHER" id="PTHR30154:SF0">
    <property type="entry name" value="LEUCINE-RESPONSIVE REGULATORY PROTEIN"/>
    <property type="match status" value="1"/>
</dbReference>
<dbReference type="Pfam" id="PF01037">
    <property type="entry name" value="AsnC_trans_reg"/>
    <property type="match status" value="1"/>
</dbReference>
<dbReference type="Pfam" id="PF13412">
    <property type="entry name" value="HTH_24"/>
    <property type="match status" value="1"/>
</dbReference>
<dbReference type="PRINTS" id="PR00033">
    <property type="entry name" value="HTHASNC"/>
</dbReference>
<dbReference type="SMART" id="SM00344">
    <property type="entry name" value="HTH_ASNC"/>
    <property type="match status" value="1"/>
</dbReference>
<dbReference type="SUPFAM" id="SSF54909">
    <property type="entry name" value="Dimeric alpha+beta barrel"/>
    <property type="match status" value="1"/>
</dbReference>
<dbReference type="SUPFAM" id="SSF46785">
    <property type="entry name" value="Winged helix' DNA-binding domain"/>
    <property type="match status" value="1"/>
</dbReference>
<dbReference type="PROSITE" id="PS00519">
    <property type="entry name" value="HTH_ASNC_1"/>
    <property type="match status" value="1"/>
</dbReference>
<dbReference type="PROSITE" id="PS50956">
    <property type="entry name" value="HTH_ASNC_2"/>
    <property type="match status" value="1"/>
</dbReference>
<name>LRP_SERMA</name>
<reference key="1">
    <citation type="submission" date="1993-09" db="EMBL/GenBank/DDBJ databases">
        <authorList>
            <person name="Calvo J.M."/>
        </authorList>
    </citation>
    <scope>NUCLEOTIDE SEQUENCE [GENOMIC DNA]</scope>
</reference>
<accession>P37425</accession>
<comment type="function">
    <text evidence="1">Mediates a global response to leucine. Exogenous leucine affects the expression of a number of different operons; lrp mediates this effect for at least some of these operons. For example it is regulator of the branched-chain amino acid transport genes (By similarity).</text>
</comment>
<comment type="subunit">
    <text>Homodimer.</text>
</comment>
<keyword id="KW-0010">Activator</keyword>
<keyword id="KW-0238">DNA-binding</keyword>
<keyword id="KW-0804">Transcription</keyword>
<keyword id="KW-0805">Transcription regulation</keyword>
<protein>
    <recommendedName>
        <fullName>Leucine-responsive regulatory protein</fullName>
    </recommendedName>
</protein>